<reference key="1">
    <citation type="book" date="2006" name="Gram positive pathogens, 2nd edition">
        <title>The Staphylococcus aureus NCTC 8325 genome.</title>
        <editorList>
            <person name="Fischetti V."/>
            <person name="Novick R."/>
            <person name="Ferretti J."/>
            <person name="Portnoy D."/>
            <person name="Rood J."/>
        </editorList>
        <authorList>
            <person name="Gillaspy A.F."/>
            <person name="Worrell V."/>
            <person name="Orvis J."/>
            <person name="Roe B.A."/>
            <person name="Dyer D.W."/>
            <person name="Iandolo J.J."/>
        </authorList>
    </citation>
    <scope>NUCLEOTIDE SEQUENCE [LARGE SCALE GENOMIC DNA]</scope>
    <source>
        <strain>NCTC 8325 / PS 47</strain>
    </source>
</reference>
<evidence type="ECO:0000255" key="1">
    <source>
        <dbReference type="HAMAP-Rule" id="MF_00144"/>
    </source>
</evidence>
<evidence type="ECO:0000305" key="2"/>
<comment type="function">
    <text evidence="1">Catalyzes the 2-thiolation of uridine at the wobble position (U34) of tRNA, leading to the formation of s(2)U34.</text>
</comment>
<comment type="catalytic activity">
    <reaction evidence="1">
        <text>S-sulfanyl-L-cysteinyl-[protein] + uridine(34) in tRNA + AH2 + ATP = 2-thiouridine(34) in tRNA + L-cysteinyl-[protein] + A + AMP + diphosphate + H(+)</text>
        <dbReference type="Rhea" id="RHEA:47032"/>
        <dbReference type="Rhea" id="RHEA-COMP:10131"/>
        <dbReference type="Rhea" id="RHEA-COMP:11726"/>
        <dbReference type="Rhea" id="RHEA-COMP:11727"/>
        <dbReference type="Rhea" id="RHEA-COMP:11728"/>
        <dbReference type="ChEBI" id="CHEBI:13193"/>
        <dbReference type="ChEBI" id="CHEBI:15378"/>
        <dbReference type="ChEBI" id="CHEBI:17499"/>
        <dbReference type="ChEBI" id="CHEBI:29950"/>
        <dbReference type="ChEBI" id="CHEBI:30616"/>
        <dbReference type="ChEBI" id="CHEBI:33019"/>
        <dbReference type="ChEBI" id="CHEBI:61963"/>
        <dbReference type="ChEBI" id="CHEBI:65315"/>
        <dbReference type="ChEBI" id="CHEBI:87170"/>
        <dbReference type="ChEBI" id="CHEBI:456215"/>
        <dbReference type="EC" id="2.8.1.13"/>
    </reaction>
</comment>
<comment type="subcellular location">
    <subcellularLocation>
        <location evidence="1">Cytoplasm</location>
    </subcellularLocation>
</comment>
<comment type="similarity">
    <text evidence="1">Belongs to the MnmA/TRMU family.</text>
</comment>
<comment type="sequence caution" evidence="2">
    <conflict type="frameshift">
        <sequence resource="EMBL-CDS" id="ABD30798"/>
    </conflict>
</comment>
<comment type="sequence caution" evidence="2">
    <conflict type="erroneous initiation">
        <sequence resource="EMBL-CDS" id="ABD30799"/>
    </conflict>
    <text>Truncated N-terminus.</text>
</comment>
<comment type="sequence caution" evidence="2">
    <conflict type="frameshift">
        <sequence resource="EMBL-CDS" id="ABD30799"/>
    </conflict>
</comment>
<accession>Q2FXV6</accession>
<accession>Q2FXV5</accession>
<dbReference type="EC" id="2.8.1.13" evidence="1"/>
<dbReference type="EMBL" id="CP000253">
    <property type="protein sequence ID" value="ABD30798.1"/>
    <property type="status" value="ALT_FRAME"/>
    <property type="molecule type" value="Genomic_DNA"/>
</dbReference>
<dbReference type="EMBL" id="CP000253">
    <property type="protein sequence ID" value="ABD30799.1"/>
    <property type="status" value="ALT_FRAME"/>
    <property type="molecule type" value="Genomic_DNA"/>
</dbReference>
<dbReference type="RefSeq" id="WP_000066097.1">
    <property type="nucleotide sequence ID" value="NZ_LS483365.1"/>
</dbReference>
<dbReference type="SMR" id="Q2FXV6"/>
<dbReference type="STRING" id="93061.SAOUHSC_01725"/>
<dbReference type="PaxDb" id="1280-SAXN108_1649"/>
<dbReference type="eggNOG" id="COG0482">
    <property type="taxonomic scope" value="Bacteria"/>
</dbReference>
<dbReference type="HOGENOM" id="CLU_035188_4_0_9"/>
<dbReference type="Proteomes" id="UP000008816">
    <property type="component" value="Chromosome"/>
</dbReference>
<dbReference type="GO" id="GO:0005737">
    <property type="term" value="C:cytoplasm"/>
    <property type="evidence" value="ECO:0007669"/>
    <property type="project" value="UniProtKB-SubCell"/>
</dbReference>
<dbReference type="GO" id="GO:0005524">
    <property type="term" value="F:ATP binding"/>
    <property type="evidence" value="ECO:0007669"/>
    <property type="project" value="UniProtKB-KW"/>
</dbReference>
<dbReference type="GO" id="GO:0000049">
    <property type="term" value="F:tRNA binding"/>
    <property type="evidence" value="ECO:0007669"/>
    <property type="project" value="UniProtKB-KW"/>
</dbReference>
<dbReference type="GO" id="GO:0103016">
    <property type="term" value="F:tRNA-uridine 2-sulfurtransferase activity"/>
    <property type="evidence" value="ECO:0007669"/>
    <property type="project" value="UniProtKB-EC"/>
</dbReference>
<dbReference type="GO" id="GO:0002143">
    <property type="term" value="P:tRNA wobble position uridine thiolation"/>
    <property type="evidence" value="ECO:0000318"/>
    <property type="project" value="GO_Central"/>
</dbReference>
<dbReference type="CDD" id="cd01998">
    <property type="entry name" value="MnmA_TRMU-like"/>
    <property type="match status" value="1"/>
</dbReference>
<dbReference type="FunFam" id="2.30.30.280:FF:000001">
    <property type="entry name" value="tRNA-specific 2-thiouridylase MnmA"/>
    <property type="match status" value="1"/>
</dbReference>
<dbReference type="FunFam" id="2.40.30.10:FF:000023">
    <property type="entry name" value="tRNA-specific 2-thiouridylase MnmA"/>
    <property type="match status" value="1"/>
</dbReference>
<dbReference type="FunFam" id="3.40.50.620:FF:000004">
    <property type="entry name" value="tRNA-specific 2-thiouridylase MnmA"/>
    <property type="match status" value="1"/>
</dbReference>
<dbReference type="Gene3D" id="2.30.30.280">
    <property type="entry name" value="Adenine nucleotide alpha hydrolases-like domains"/>
    <property type="match status" value="1"/>
</dbReference>
<dbReference type="Gene3D" id="3.40.50.620">
    <property type="entry name" value="HUPs"/>
    <property type="match status" value="1"/>
</dbReference>
<dbReference type="Gene3D" id="2.40.30.10">
    <property type="entry name" value="Translation factors"/>
    <property type="match status" value="1"/>
</dbReference>
<dbReference type="HAMAP" id="MF_00144">
    <property type="entry name" value="tRNA_thiouridyl_MnmA"/>
    <property type="match status" value="1"/>
</dbReference>
<dbReference type="InterPro" id="IPR004506">
    <property type="entry name" value="MnmA-like"/>
</dbReference>
<dbReference type="InterPro" id="IPR046885">
    <property type="entry name" value="MnmA-like_C"/>
</dbReference>
<dbReference type="InterPro" id="IPR046884">
    <property type="entry name" value="MnmA-like_central"/>
</dbReference>
<dbReference type="InterPro" id="IPR023382">
    <property type="entry name" value="MnmA-like_central_sf"/>
</dbReference>
<dbReference type="InterPro" id="IPR014729">
    <property type="entry name" value="Rossmann-like_a/b/a_fold"/>
</dbReference>
<dbReference type="NCBIfam" id="NF001138">
    <property type="entry name" value="PRK00143.1"/>
    <property type="match status" value="1"/>
</dbReference>
<dbReference type="NCBIfam" id="TIGR00420">
    <property type="entry name" value="trmU"/>
    <property type="match status" value="1"/>
</dbReference>
<dbReference type="PANTHER" id="PTHR11933:SF5">
    <property type="entry name" value="MITOCHONDRIAL TRNA-SPECIFIC 2-THIOURIDYLASE 1"/>
    <property type="match status" value="1"/>
</dbReference>
<dbReference type="PANTHER" id="PTHR11933">
    <property type="entry name" value="TRNA 5-METHYLAMINOMETHYL-2-THIOURIDYLATE -METHYLTRANSFERASE"/>
    <property type="match status" value="1"/>
</dbReference>
<dbReference type="Pfam" id="PF03054">
    <property type="entry name" value="tRNA_Me_trans"/>
    <property type="match status" value="1"/>
</dbReference>
<dbReference type="Pfam" id="PF20258">
    <property type="entry name" value="tRNA_Me_trans_C"/>
    <property type="match status" value="1"/>
</dbReference>
<dbReference type="Pfam" id="PF20259">
    <property type="entry name" value="tRNA_Me_trans_M"/>
    <property type="match status" value="1"/>
</dbReference>
<dbReference type="SUPFAM" id="SSF52402">
    <property type="entry name" value="Adenine nucleotide alpha hydrolases-like"/>
    <property type="match status" value="1"/>
</dbReference>
<protein>
    <recommendedName>
        <fullName evidence="1">tRNA-specific 2-thiouridylase MnmA</fullName>
        <ecNumber evidence="1">2.8.1.13</ecNumber>
    </recommendedName>
</protein>
<gene>
    <name evidence="1" type="primary">mnmA</name>
    <name type="ordered locus">SAOUHSC_01725/SAOUHSC_01726</name>
</gene>
<name>MNMA_STAA8</name>
<sequence>MSNKDIRVVVGMSGGVDSSVTAHVLKEQGYDVIGIFMKNWDDTDENGVCTATEDYNDVIEVCNQIGIPYYAVNFEKEYWDKVFTYFLDEYKKGRTPNPDVMCNKEIKFKAFLDHAMNLGADYVATGHYARIHRHEDGHVEMLRGVDNNKDQTYFLNQLSQQQLSKVMFPIGDIEKSEVRRIAEEQGLVTAKKKDSTGICFIGEKNFKTFLSQYLPAQPGDMITLDGKKMGKHSGLMYYTIGQRHGLGIGGDGDPWFVVGKNLKDNVLYVEQGFHHDALYSDYLIASDYSFVNPEDNDLDQGFECTAKFRYRQKDTKVFVKRENDHALRVTFAEPVRAITPGQAVVFYQGDVCLGGATIDDVFKNEGQLNYVV</sequence>
<keyword id="KW-0067">ATP-binding</keyword>
<keyword id="KW-0963">Cytoplasm</keyword>
<keyword id="KW-1015">Disulfide bond</keyword>
<keyword id="KW-0547">Nucleotide-binding</keyword>
<keyword id="KW-1185">Reference proteome</keyword>
<keyword id="KW-0694">RNA-binding</keyword>
<keyword id="KW-0808">Transferase</keyword>
<keyword id="KW-0819">tRNA processing</keyword>
<keyword id="KW-0820">tRNA-binding</keyword>
<feature type="chain" id="PRO_0000349806" description="tRNA-specific 2-thiouridylase MnmA">
    <location>
        <begin position="1"/>
        <end position="372"/>
    </location>
</feature>
<feature type="region of interest" description="Interaction with target base in tRNA" evidence="1">
    <location>
        <begin position="97"/>
        <end position="99"/>
    </location>
</feature>
<feature type="region of interest" description="Interaction with tRNA" evidence="1">
    <location>
        <begin position="149"/>
        <end position="151"/>
    </location>
</feature>
<feature type="region of interest" description="Interaction with tRNA" evidence="1">
    <location>
        <begin position="309"/>
        <end position="310"/>
    </location>
</feature>
<feature type="active site" description="Nucleophile" evidence="1">
    <location>
        <position position="102"/>
    </location>
</feature>
<feature type="active site" description="Cysteine persulfide intermediate" evidence="1">
    <location>
        <position position="199"/>
    </location>
</feature>
<feature type="binding site" evidence="1">
    <location>
        <begin position="11"/>
        <end position="18"/>
    </location>
    <ligand>
        <name>ATP</name>
        <dbReference type="ChEBI" id="CHEBI:30616"/>
    </ligand>
</feature>
<feature type="binding site" evidence="1">
    <location>
        <position position="37"/>
    </location>
    <ligand>
        <name>ATP</name>
        <dbReference type="ChEBI" id="CHEBI:30616"/>
    </ligand>
</feature>
<feature type="binding site" evidence="1">
    <location>
        <position position="126"/>
    </location>
    <ligand>
        <name>ATP</name>
        <dbReference type="ChEBI" id="CHEBI:30616"/>
    </ligand>
</feature>
<feature type="site" description="Interaction with tRNA" evidence="1">
    <location>
        <position position="127"/>
    </location>
</feature>
<feature type="site" description="Interaction with tRNA" evidence="1">
    <location>
        <position position="342"/>
    </location>
</feature>
<feature type="disulfide bond" description="Alternate" evidence="1">
    <location>
        <begin position="102"/>
        <end position="199"/>
    </location>
</feature>
<proteinExistence type="inferred from homology"/>
<organism>
    <name type="scientific">Staphylococcus aureus (strain NCTC 8325 / PS 47)</name>
    <dbReference type="NCBI Taxonomy" id="93061"/>
    <lineage>
        <taxon>Bacteria</taxon>
        <taxon>Bacillati</taxon>
        <taxon>Bacillota</taxon>
        <taxon>Bacilli</taxon>
        <taxon>Bacillales</taxon>
        <taxon>Staphylococcaceae</taxon>
        <taxon>Staphylococcus</taxon>
    </lineage>
</organism>